<comment type="function">
    <text evidence="2">Force generating protein component of the outer dynein arms (ODAs) in the sperm flagellum. Produces force towards the minus ends of microtubules. Dynein has ATPase activity; the force-producing power stroke is thought to occur on release of ADP. Plays a major role in sperm motility, implicated in sperm flagellar assembly and beating.</text>
</comment>
<comment type="subunit">
    <text>Consists of at least two heavy chains and a number of intermediate and light chains.</text>
</comment>
<comment type="subcellular location">
    <subcellularLocation>
        <location evidence="2">Cytoplasm</location>
        <location evidence="2">Cytoskeleton</location>
        <location evidence="2">Flagellum axoneme</location>
    </subcellularLocation>
</comment>
<comment type="alternative products">
    <event type="alternative splicing"/>
    <isoform>
        <id>Q69Z23-1</id>
        <name>1</name>
        <sequence type="displayed"/>
    </isoform>
    <isoform>
        <id>Q69Z23-2</id>
        <name>2</name>
        <sequence type="described" ref="VSP_032116 VSP_032117"/>
    </isoform>
</comment>
<comment type="domain">
    <text evidence="1">Dynein heavy chains probably consist of an N-terminal stem (which binds cargo and interacts with other dynein components), and the head or motor domain. The motor contains six tandemly-linked AAA domains in the head, which form a ring. A stalk-like structure (formed by two of the coiled coil domains) protrudes between AAA 4 and AAA 5 and terminates in a microtubule-binding site. A seventh domain may also contribute to this ring; it is not clear whether the N-terminus or the C-terminus forms this extra domain. There are four well-conserved and two non-conserved ATPase sites, one per AAA domain. Probably only one of these (within AAA 1) actually hydrolyzes ATP, the others may serve a regulatory function (By similarity).</text>
</comment>
<comment type="similarity">
    <text evidence="5">Belongs to the dynein heavy chain family.</text>
</comment>
<feature type="chain" id="PRO_0000323750" description="Dynein axonemal heavy chain 17">
    <location>
        <begin position="1"/>
        <end position="4481"/>
    </location>
</feature>
<feature type="repeat" description="Kelch 1">
    <location>
        <begin position="521"/>
        <end position="569"/>
    </location>
</feature>
<feature type="repeat" description="TPR 1">
    <location>
        <begin position="1533"/>
        <end position="1566"/>
    </location>
</feature>
<feature type="repeat" description="TPR 2">
    <location>
        <begin position="1688"/>
        <end position="1722"/>
    </location>
</feature>
<feature type="repeat" description="Kelch 2">
    <location>
        <begin position="2229"/>
        <end position="2275"/>
    </location>
</feature>
<feature type="repeat" description="Kelch 3">
    <location>
        <begin position="2782"/>
        <end position="2834"/>
    </location>
</feature>
<feature type="repeat" description="TPR 3">
    <location>
        <begin position="4138"/>
        <end position="4173"/>
    </location>
</feature>
<feature type="repeat" description="Kelch 4">
    <location>
        <begin position="4272"/>
        <end position="4321"/>
    </location>
</feature>
<feature type="repeat" description="Kelch 5">
    <location>
        <begin position="4339"/>
        <end position="4385"/>
    </location>
</feature>
<feature type="region of interest" description="Stem" evidence="1">
    <location>
        <begin position="1"/>
        <end position="1792"/>
    </location>
</feature>
<feature type="region of interest" description="AAA 1" evidence="1">
    <location>
        <begin position="1793"/>
        <end position="2014"/>
    </location>
</feature>
<feature type="region of interest" description="AAA 2" evidence="1">
    <location>
        <begin position="2074"/>
        <end position="2295"/>
    </location>
</feature>
<feature type="region of interest" description="AAA 3" evidence="1">
    <location>
        <begin position="2401"/>
        <end position="2649"/>
    </location>
</feature>
<feature type="region of interest" description="AAA 4" evidence="1">
    <location>
        <begin position="2747"/>
        <end position="2996"/>
    </location>
</feature>
<feature type="region of interest" description="Stalk" evidence="1">
    <location>
        <begin position="3011"/>
        <end position="3297"/>
    </location>
</feature>
<feature type="region of interest" description="AAA 5" evidence="1">
    <location>
        <begin position="3389"/>
        <end position="3616"/>
    </location>
</feature>
<feature type="region of interest" description="AAA 6" evidence="1">
    <location>
        <begin position="3826"/>
        <end position="4059"/>
    </location>
</feature>
<feature type="coiled-coil region" evidence="3">
    <location>
        <begin position="759"/>
        <end position="826"/>
    </location>
</feature>
<feature type="coiled-coil region" evidence="3">
    <location>
        <begin position="3011"/>
        <end position="3071"/>
    </location>
</feature>
<feature type="coiled-coil region" evidence="3">
    <location>
        <begin position="3241"/>
        <end position="3293"/>
    </location>
</feature>
<feature type="binding site" evidence="3">
    <location>
        <begin position="1831"/>
        <end position="1838"/>
    </location>
    <ligand>
        <name>ATP</name>
        <dbReference type="ChEBI" id="CHEBI:30616"/>
    </ligand>
</feature>
<feature type="binding site" evidence="3">
    <location>
        <begin position="2112"/>
        <end position="2119"/>
    </location>
    <ligand>
        <name>ATP</name>
        <dbReference type="ChEBI" id="CHEBI:30616"/>
    </ligand>
</feature>
<feature type="binding site" evidence="3">
    <location>
        <begin position="2439"/>
        <end position="2446"/>
    </location>
    <ligand>
        <name>ATP</name>
        <dbReference type="ChEBI" id="CHEBI:30616"/>
    </ligand>
</feature>
<feature type="binding site" evidence="3">
    <location>
        <begin position="2785"/>
        <end position="2792"/>
    </location>
    <ligand>
        <name>ATP</name>
        <dbReference type="ChEBI" id="CHEBI:30616"/>
    </ligand>
</feature>
<feature type="splice variant" id="VSP_032116" description="In isoform 2." evidence="4">
    <original>NFVEEKMGSKFVEGRSVEFSKSYKE</original>
    <variation>EKTGIYHRQWETPQRVPGARTRGGS</variation>
    <location>
        <begin position="3828"/>
        <end position="3852"/>
    </location>
</feature>
<feature type="splice variant" id="VSP_032117" description="In isoform 2." evidence="4">
    <location>
        <begin position="3853"/>
        <end position="4481"/>
    </location>
</feature>
<organism>
    <name type="scientific">Mus musculus</name>
    <name type="common">Mouse</name>
    <dbReference type="NCBI Taxonomy" id="10090"/>
    <lineage>
        <taxon>Eukaryota</taxon>
        <taxon>Metazoa</taxon>
        <taxon>Chordata</taxon>
        <taxon>Craniata</taxon>
        <taxon>Vertebrata</taxon>
        <taxon>Euteleostomi</taxon>
        <taxon>Mammalia</taxon>
        <taxon>Eutheria</taxon>
        <taxon>Euarchontoglires</taxon>
        <taxon>Glires</taxon>
        <taxon>Rodentia</taxon>
        <taxon>Myomorpha</taxon>
        <taxon>Muroidea</taxon>
        <taxon>Muridae</taxon>
        <taxon>Murinae</taxon>
        <taxon>Mus</taxon>
        <taxon>Mus</taxon>
    </lineage>
</organism>
<gene>
    <name evidence="6" type="primary">Dnah17</name>
    <name type="synonym">Dnahc17</name>
    <name type="synonym">Kiaa3028</name>
</gene>
<name>DYH17_MOUSE</name>
<evidence type="ECO:0000250" key="1"/>
<evidence type="ECO:0000250" key="2">
    <source>
        <dbReference type="UniProtKB" id="Q9UFH2"/>
    </source>
</evidence>
<evidence type="ECO:0000255" key="3"/>
<evidence type="ECO:0000303" key="4">
    <source>
    </source>
</evidence>
<evidence type="ECO:0000305" key="5"/>
<evidence type="ECO:0000312" key="6">
    <source>
        <dbReference type="MGI" id="MGI:1917176"/>
    </source>
</evidence>
<keyword id="KW-0025">Alternative splicing</keyword>
<keyword id="KW-0067">ATP-binding</keyword>
<keyword id="KW-0966">Cell projection</keyword>
<keyword id="KW-0969">Cilium</keyword>
<keyword id="KW-0175">Coiled coil</keyword>
<keyword id="KW-0963">Cytoplasm</keyword>
<keyword id="KW-0206">Cytoskeleton</keyword>
<keyword id="KW-0243">Dynein</keyword>
<keyword id="KW-0282">Flagellum</keyword>
<keyword id="KW-0880">Kelch repeat</keyword>
<keyword id="KW-0493">Microtubule</keyword>
<keyword id="KW-0505">Motor protein</keyword>
<keyword id="KW-0547">Nucleotide-binding</keyword>
<keyword id="KW-1185">Reference proteome</keyword>
<keyword id="KW-0677">Repeat</keyword>
<keyword id="KW-0802">TPR repeat</keyword>
<proteinExistence type="evidence at protein level"/>
<sequence>MPDLRIDYLETVSSVLLKFKADKWGKLIGAEENMALLTEFFDKIDNPVLVLTLNAAGMIIPCLGFPESLKSKGVYFIKMKPENITKDNYKTHLIYGDISPTTVDQLIAVVEEVLYSLLNQSENMDGWPRVVSEDIVKQVHRLKNEMFVMGGKIKGKTLLPIPEHLGSLDGTLDSMERIPSSMDNSLLHSIETIIIDWSHQIRDVLSKDSAQALLDGLHPLPRVEFEFWDARLMNLQCIHEQLNRPKVNKIVEILEKAKSCYWPALQNVYMNVTQGLKEANGIVLYLKPLRILLEEMEQADFTMLPSFIVKVLSTICFIWATSEHYNTPSRVIVILREFCNQIIEMTRTYLSPDEVLKGLQGEIEEVLGNISLSVSVLKGLFQAYDFCCANMKLFFKDRPPVPWEFPSSLAFSRMNSFFHRVQTIEDLYKTAIEFLKLEKIELGGVWGNILGNLVTQIYDEVFELVKVFAECKYDPLDPGDSSFDDDYSDFETKIQDLDRRLATIFCQAFDDCNCMESSAKLLYMCGGLLERPLILVEVVPRYSVMLEMFNTELDNAKLMYDAQMAASADGQIPPIHKNMSPVSGQLKWSLELQERLEVSMKYLKHIEHPVMSSMEAKLIYDKYDEMMGLLQSCRMKKYQQWVEGVDQDCHFNLGQPLIQRDPFTSLIQVNFSKALVAVLREVKYLNFQQQKEIPESAEKLFSENETFRKFVGNLELIVGWYNEIKTTVKDVEFPLIKSELEAIDVKLLSAETTLFWNGENVMEYIQEMREMLYNLQNRIQKAKQNVEGITQAMQEWSANPLFERKDNKKEALLDLDGRVANLNKRYAAVKEAGVRIQAMVVENAELFRADTTSQSWKDYVNYIDTVVLDEFDRFIRKSLNYLMDNMTMDESIAPLFEIRMELDKDGLTYNPSLEMGDEAGFLSLIEGLINDLYNVARLIPRLAKGRLNYKSDLEDITDLIEMREEVSSLVIGAMKVAEEYQDSFERYSYLWVDDLQEFMKNFLIFGHAPTPEELDTKTDDTIPKTPPTLAQFQQQIDSYEKLYEEVSSCENTKVFHGWLQCDCRPFKQTLLNTIKRWSFLFKRYLNNHVINSLADLESFMNITRTALKKPLKEGDYDGLVEVMGHLMKVKERQVATDSMFEPLKQTIELLKSYGEEMPEEIYLKLQELPEQWTNTKKLAIQVKQNVAPLQANEVNILRRKCQQFELKQHEFREKFRRDAPFSFSDPEPYKSLNKIYLLYGVMEALCKSASLFEVTVPDYKQLKACHREVRLLKELWDMIVMVNTSIDDWKTTKWKDINVEQMDIDCKKFAKDVRSLDKEMKPWDAFVGLDNTVKNMITSLRAVSELQNPAIRDRHWQQLMQATQVKFEMSEETTLADLLQLNLHKYEDEVRNIVDKAVKESGMEKVLKTLDITWTTMEFEHELHPRTGTMMLKSDEVLVETLEDNQVQLQNLMMSKYLSHFLKEVTSWQQKLSTADSVISIWFEVQRTWSHLESIFIGSEDIRAQLPEDSKRFDAIDQEFKALMEDAVKTPNVVEATNKPDLYNKLENLKMSLAVCEKALAEYLETKRLAFPRFYFVSSADLLDILSNGNDPVEVSRHLSKLFDSLCKLKFRLDASGKPLKFGLGMYSKEDEFVDFDKECDLSGQVEVWLNRVLDRMRATLRHEIPEAVVTYEEKPREQWIFDYPAQIWWTTEVGLAFARLEEGYENAIKDYNKKQISQLNALITLLIGNLTAGDRMKIMTICTIDVHARDVVAKMITVESSQAFTWQSQLRHRWDEEKKHCFANICDAQIKYSYEYLGNTPRLVITPLTDRCYITLTQSLHLIMGGAPAGPAGTGKTETTKDLGRALGTMVYVFNCSEQMDYKSCGNIYKGLAQTGAWGCFDEFNRISVEVLSVIAVQVKCVQDAIRAKKKKFNFLGEIISLVPTVGIFITMNPGYAGRTELPENLKALFRPCAMVVPDFELICEIMLVAEGFLDARLLARKFITLYTLCKELLSKQDHYDWGLRAIKSVLVVAGSLKRGDPTRAEDQVLMRALRDFNIPKIVTDDLPVFMGLIGDLFPALDVPRKRDLNFEKIIKQSIVELKLQAEDSFVLKVVQLEELLQVRHSVFVIGNAGSGKSQVLKSLNKTYQNLKRKPVAVDLDPKAVTCDELFGIINPATREWKDGLFSTIMRDLANLTHEGPKWIVLDGDIDPMWIESLNTVMDDNKVLTLASNERIPLNRTMRLVFEISHLRTATPATVSRAGILYINPADLGWNPVVSSWIERRKVQSEKANLIILFDKYLPTCLDKLRIGFKRITPVPEITVIQTILYLLECLLTEKNAPPDSPKELYELYFVFACFWAFGGAMFQDQLIDYRVEFSKWWINEFKTIKLPSQGTIFDYYIDPETKKFLPWTDKVPNFELDPDIPLQASLVHTTETIRIRYFIDLLMEKAWPVMLVGNAGTGKSVLMGDKLENLSTDDYLVQAVPFNFYTTSAMLQGVLEKPLEKKSGRNYGPPGTKKLIYFIDDMNMPEVDKYGTVAPHTLIRQHMDHRHWYDRQKLTLKDVHNCQYVACMNPTSGSFTIDPRLQRHFCVFAVSFPGQEALTSIYNTILAQHLSFRSAPLVIQRLSSHLVTAALALHQKVSATFLPTAIKFHYIFNLRDLSNIFQGILFSTAEILKTPLDLVRLWLHEAERVYGDKMVDEKDQETLHRVTIASVKKFFDDLGEENLFAKPNIFCHFTQGIGDPKYFPVTDVAQLNKLLKDVLDSYNEVNAVMNLVLFEDAVAHICKINRILESPRGNALLVGVGGSGKQSLSRLAAYISALDVFQITLKKGYAIPDLKMDLATQYIKSAVKNVPSVFLMTDSQVAEEQFLVLINDLLASGEIPGLFGDEDLENIISSMRPQVKSLGIADTREACWKFFIEKVRRQLKVILCFSPVGSVLRVRARKFPAVVNCTAINWFHEWPEDALVSVSARFLEETEGIEPEVKTSISLFMAYVHTTVNEMSKIYLTIERRYNYTTPKTFLEQIKLYQNLLAKKRMELVAKIERLENGLMKLQSTASQVDDLKAKLAVQETELKQKNENADKLIQVVGVETEKVSKEKAIADEEEMKVEVINKNVTEKQKACETDLAKAEPALLAAQEALDTLNKNNLTELKSFGSPPDAVVNVTAAVMILTAPGGKIPKDKSWKAAKIMMGKVDTFLDSLKKFDKEHIPEACLKAFKPYQGNPTFDPEFIRSKSTAAAGLCSWCINIVRFYEVYCDVAPKRQALEEANAELAEAQEKLSRIKNKIAELNANLSNLTSAFEKATAEKIKCQQEADATNRVISLANRLVGGLASENVRWAESVENFKSQGVTLCGDVLLISAFVSYVGYFTKKYRNELMEKFWIPYINKLKVPIPITEGLDPLTLLTDDADVATWNNQGLPSDRMSTENATILCNTERWPLIVDAQLQGIKWIKNKYGSDLQAIRLGQKSYLDIIEQAISAGDTLLIENIGETVDPVLDPLLGRNTIKKGRFIKIGDKEVEYHPSFRLILHTKYFNPHYKPEMQAQCTLINFLVTRDGLEDQLLAAVVAKERPDLEQLKANLTKSQNEFKIVLKELEDSLLARLSAASGNFLGDTALVENLETTKHTANEIEEKVQEAKITEVKINEARENYRPAAERASLLYFILNDLNKINPIYQFSLKAFNVVFEKAIQKTAPADEVKQRVINLTDEITYSVYMYTARGLFERDKLIFLAQVTFQVLSMKKELNPVELDFLLRFPFKAGVVSPVDFLQHQSWGGIKALSEMDEFKNLDSDIEGSAKRWKKLVESEAPEKEIFPKEWKNKTALQKLCMVRCMRPDRMTYAVKNFVEEKMGSKFVEGRSVEFSKSYKESSPSTPIFFILSPGVDPLKDVEALGKKLGFTIDNGKLHNVSLGQGQEVVAENALDVAAEKGHWVILQVRGSLPQNIHLVARWLGILDKKVERYSSGSHEDYRVFISAEPAPTAETHIIPQGILENAIKITNEPPTGMYANLHKALDLFTQDTLEMCTKEIEFKCILFALCYFHAVVAERRKFGAQGWNRSYPFNNGDLTISINVLYNYLEANSKVPWDDLRYLFGEIMYGGHITDDWDRRLCRTYLAEYIRVEMLEGEVLLAPGFQIPPNLDYKGYHEYIDENLPPESPYLYGLHPNAEIGFLTVTSEKLFRTVLEMQPKETDSGAGTGVSREEKVGAVPVPEGSLGSEGSLGTIGLPGTGFQVKAVLDDILEKIPETFNMAEIMAKAAEKTPYVVVAFQECERMNILTNEMRRSLKELNLGLKGELTITTDMEDLSTALFYDTVPDTWVARAYPSMMGLAAWYADLLQRIRELESWTTDFALPTTVWLAGFFNPQSFLTAIMQSMARKNEWPLDKMCLSVEVTKKNREDMTAPPREGSYVYGLFMEGARWDTQTGVIAEARLKDLTPVMPVIFIKAIPVDRMETKNIYECPVYKTRIRGPTYVWTFNLKTKEKAAKWILAAVALLLQV</sequence>
<accession>Q69Z23</accession>
<accession>O08820</accession>
<protein>
    <recommendedName>
        <fullName evidence="5">Dynein axonemal heavy chain 17</fullName>
    </recommendedName>
    <alternativeName>
        <fullName>Axonemal beta dynein heavy chain 17</fullName>
    </alternativeName>
    <alternativeName>
        <fullName>Ciliary dynein heavy chain 17</fullName>
    </alternativeName>
</protein>
<reference key="1">
    <citation type="journal article" date="2009" name="PLoS Biol.">
        <title>Lineage-specific biology revealed by a finished genome assembly of the mouse.</title>
        <authorList>
            <person name="Church D.M."/>
            <person name="Goodstadt L."/>
            <person name="Hillier L.W."/>
            <person name="Zody M.C."/>
            <person name="Goldstein S."/>
            <person name="She X."/>
            <person name="Bult C.J."/>
            <person name="Agarwala R."/>
            <person name="Cherry J.L."/>
            <person name="DiCuccio M."/>
            <person name="Hlavina W."/>
            <person name="Kapustin Y."/>
            <person name="Meric P."/>
            <person name="Maglott D."/>
            <person name="Birtle Z."/>
            <person name="Marques A.C."/>
            <person name="Graves T."/>
            <person name="Zhou S."/>
            <person name="Teague B."/>
            <person name="Potamousis K."/>
            <person name="Churas C."/>
            <person name="Place M."/>
            <person name="Herschleb J."/>
            <person name="Runnheim R."/>
            <person name="Forrest D."/>
            <person name="Amos-Landgraf J."/>
            <person name="Schwartz D.C."/>
            <person name="Cheng Z."/>
            <person name="Lindblad-Toh K."/>
            <person name="Eichler E.E."/>
            <person name="Ponting C.P."/>
        </authorList>
    </citation>
    <scope>NUCLEOTIDE SEQUENCE [LARGE SCALE GENOMIC DNA]</scope>
    <source>
        <strain>C57BL/6J</strain>
    </source>
</reference>
<reference key="2">
    <citation type="journal article" date="1997" name="Gene">
        <title>Identification of dynein heavy chain genes expressed in human and mouse testis: chromosomal localization of an axonemal dynein gene.</title>
        <authorList>
            <person name="Neesen J."/>
            <person name="Koehler M.R."/>
            <person name="Kirschner R."/>
            <person name="Steinlein C."/>
            <person name="Kreutzberger J."/>
            <person name="Engel W."/>
            <person name="Schmid M."/>
        </authorList>
    </citation>
    <scope>NUCLEOTIDE SEQUENCE [MRNA] OF 1836-1936 (ISOFORM 1)</scope>
    <source>
        <strain>NMRI</strain>
        <tissue>Testis</tissue>
    </source>
</reference>
<reference key="3">
    <citation type="journal article" date="2004" name="DNA Res.">
        <title>Prediction of the coding sequences of mouse homologues of KIAA gene: IV. The complete nucleotide sequences of 500 mouse KIAA-homologous cDNAs identified by screening of terminal sequences of cDNA clones randomly sampled from size-fractionated libraries.</title>
        <authorList>
            <person name="Okazaki N."/>
            <person name="Kikuno R."/>
            <person name="Ohara R."/>
            <person name="Inamoto S."/>
            <person name="Koseki H."/>
            <person name="Hiraoka S."/>
            <person name="Saga Y."/>
            <person name="Seino S."/>
            <person name="Nishimura M."/>
            <person name="Kaisho T."/>
            <person name="Hoshino K."/>
            <person name="Kitamura H."/>
            <person name="Nagase T."/>
            <person name="Ohara O."/>
            <person name="Koga H."/>
        </authorList>
    </citation>
    <scope>NUCLEOTIDE SEQUENCE [LARGE SCALE MRNA] OF 2192-4479 (ISOFORM 2)</scope>
    <source>
        <tissue>Thymus</tissue>
    </source>
</reference>
<reference key="4">
    <citation type="journal article" date="2010" name="Cell">
        <title>A tissue-specific atlas of mouse protein phosphorylation and expression.</title>
        <authorList>
            <person name="Huttlin E.L."/>
            <person name="Jedrychowski M.P."/>
            <person name="Elias J.E."/>
            <person name="Goswami T."/>
            <person name="Rad R."/>
            <person name="Beausoleil S.A."/>
            <person name="Villen J."/>
            <person name="Haas W."/>
            <person name="Sowa M.E."/>
            <person name="Gygi S.P."/>
        </authorList>
    </citation>
    <scope>IDENTIFICATION BY MASS SPECTROMETRY [LARGE SCALE ANALYSIS]</scope>
    <source>
        <tissue>Testis</tissue>
    </source>
</reference>
<dbReference type="EMBL" id="AL591204">
    <property type="status" value="NOT_ANNOTATED_CDS"/>
    <property type="molecule type" value="Genomic_DNA"/>
</dbReference>
<dbReference type="EMBL" id="AL591433">
    <property type="status" value="NOT_ANNOTATED_CDS"/>
    <property type="molecule type" value="Genomic_DNA"/>
</dbReference>
<dbReference type="EMBL" id="Z83807">
    <property type="protein sequence ID" value="CAB06061.1"/>
    <property type="molecule type" value="mRNA"/>
</dbReference>
<dbReference type="EMBL" id="AK173343">
    <property type="protein sequence ID" value="BAD32621.1"/>
    <property type="molecule type" value="mRNA"/>
</dbReference>
<dbReference type="SMR" id="Q69Z23"/>
<dbReference type="FunCoup" id="Q69Z23">
    <property type="interactions" value="77"/>
</dbReference>
<dbReference type="STRING" id="10090.ENSMUSP00000081864"/>
<dbReference type="GlyGen" id="Q69Z23">
    <property type="glycosylation" value="2 sites, 1 O-linked glycan (2 sites)"/>
</dbReference>
<dbReference type="iPTMnet" id="Q69Z23"/>
<dbReference type="PhosphoSitePlus" id="Q69Z23"/>
<dbReference type="jPOST" id="Q69Z23"/>
<dbReference type="PaxDb" id="10090-ENSMUSP00000101915"/>
<dbReference type="ProteomicsDB" id="277641">
    <molecule id="Q69Z23-1"/>
</dbReference>
<dbReference type="ProteomicsDB" id="277642">
    <molecule id="Q69Z23-2"/>
</dbReference>
<dbReference type="AGR" id="MGI:1917176"/>
<dbReference type="MGI" id="MGI:1917176">
    <property type="gene designation" value="Dnah17"/>
</dbReference>
<dbReference type="eggNOG" id="KOG3595">
    <property type="taxonomic scope" value="Eukaryota"/>
</dbReference>
<dbReference type="InParanoid" id="Q69Z23"/>
<dbReference type="PhylomeDB" id="Q69Z23"/>
<dbReference type="PRO" id="PR:Q69Z23"/>
<dbReference type="Proteomes" id="UP000000589">
    <property type="component" value="Unplaced"/>
</dbReference>
<dbReference type="RNAct" id="Q69Z23">
    <property type="molecule type" value="protein"/>
</dbReference>
<dbReference type="GO" id="GO:0005930">
    <property type="term" value="C:axoneme"/>
    <property type="evidence" value="ECO:0000250"/>
    <property type="project" value="UniProtKB"/>
</dbReference>
<dbReference type="GO" id="GO:0005874">
    <property type="term" value="C:microtubule"/>
    <property type="evidence" value="ECO:0007669"/>
    <property type="project" value="UniProtKB-KW"/>
</dbReference>
<dbReference type="GO" id="GO:0036157">
    <property type="term" value="C:outer dynein arm"/>
    <property type="evidence" value="ECO:0000250"/>
    <property type="project" value="UniProtKB"/>
</dbReference>
<dbReference type="GO" id="GO:0036126">
    <property type="term" value="C:sperm flagellum"/>
    <property type="evidence" value="ECO:0000250"/>
    <property type="project" value="UniProtKB"/>
</dbReference>
<dbReference type="GO" id="GO:0005524">
    <property type="term" value="F:ATP binding"/>
    <property type="evidence" value="ECO:0007669"/>
    <property type="project" value="UniProtKB-KW"/>
</dbReference>
<dbReference type="GO" id="GO:0045505">
    <property type="term" value="F:dynein intermediate chain binding"/>
    <property type="evidence" value="ECO:0007669"/>
    <property type="project" value="InterPro"/>
</dbReference>
<dbReference type="GO" id="GO:0051959">
    <property type="term" value="F:dynein light intermediate chain binding"/>
    <property type="evidence" value="ECO:0007669"/>
    <property type="project" value="InterPro"/>
</dbReference>
<dbReference type="GO" id="GO:0008569">
    <property type="term" value="F:minus-end-directed microtubule motor activity"/>
    <property type="evidence" value="ECO:0007669"/>
    <property type="project" value="InterPro"/>
</dbReference>
<dbReference type="GO" id="GO:0007018">
    <property type="term" value="P:microtubule-based movement"/>
    <property type="evidence" value="ECO:0007669"/>
    <property type="project" value="InterPro"/>
</dbReference>
<dbReference type="GO" id="GO:0036158">
    <property type="term" value="P:outer dynein arm assembly"/>
    <property type="evidence" value="ECO:0000250"/>
    <property type="project" value="UniProtKB"/>
</dbReference>
<dbReference type="FunFam" id="3.40.50.300:FF:001810">
    <property type="entry name" value="Cytoplasmic dynein 2 heavy chain 1"/>
    <property type="match status" value="1"/>
</dbReference>
<dbReference type="FunFam" id="1.10.287.2620:FF:000004">
    <property type="entry name" value="Dynein axonemal heavy chain 17"/>
    <property type="match status" value="1"/>
</dbReference>
<dbReference type="FunFam" id="1.20.1270.280:FF:000003">
    <property type="entry name" value="Dynein axonemal heavy chain 17"/>
    <property type="match status" value="1"/>
</dbReference>
<dbReference type="FunFam" id="1.20.920.20:FF:000003">
    <property type="entry name" value="Dynein axonemal heavy chain 17"/>
    <property type="match status" value="1"/>
</dbReference>
<dbReference type="FunFam" id="1.20.920.30:FF:000003">
    <property type="entry name" value="Dynein axonemal heavy chain 17"/>
    <property type="match status" value="1"/>
</dbReference>
<dbReference type="FunFam" id="3.10.490.20:FF:000002">
    <property type="entry name" value="Dynein axonemal heavy chain 17"/>
    <property type="match status" value="1"/>
</dbReference>
<dbReference type="FunFam" id="3.40.50.300:FF:000219">
    <property type="entry name" value="Dynein axonemal heavy chain 17"/>
    <property type="match status" value="1"/>
</dbReference>
<dbReference type="FunFam" id="3.40.50.300:FF:000682">
    <property type="entry name" value="Dynein axonemal heavy chain 17"/>
    <property type="match status" value="1"/>
</dbReference>
<dbReference type="FunFam" id="1.10.8.1220:FF:000001">
    <property type="entry name" value="Dynein axonemal heavy chain 5"/>
    <property type="match status" value="1"/>
</dbReference>
<dbReference type="FunFam" id="3.20.180.20:FF:000001">
    <property type="entry name" value="Dynein axonemal heavy chain 5"/>
    <property type="match status" value="1"/>
</dbReference>
<dbReference type="FunFam" id="1.20.140.100:FF:000007">
    <property type="entry name" value="Dynein axonemal heavy chain 9"/>
    <property type="match status" value="1"/>
</dbReference>
<dbReference type="FunFam" id="1.10.8.710:FF:000002">
    <property type="entry name" value="dynein heavy chain 17, axonemal"/>
    <property type="match status" value="1"/>
</dbReference>
<dbReference type="FunFam" id="3.40.50.300:FF:000411">
    <property type="entry name" value="dynein heavy chain 17, axonemal"/>
    <property type="match status" value="1"/>
</dbReference>
<dbReference type="FunFam" id="1.10.8.720:FF:000002">
    <property type="entry name" value="Dynein heavy chain 9, axonemal"/>
    <property type="match status" value="1"/>
</dbReference>
<dbReference type="FunFam" id="1.20.58.1120:FF:000002">
    <property type="entry name" value="Dynein heavy chain 9, axonemal"/>
    <property type="match status" value="1"/>
</dbReference>
<dbReference type="FunFam" id="3.40.50.300:FF:000049">
    <property type="entry name" value="Dynein, axonemal, heavy chain 5"/>
    <property type="match status" value="1"/>
</dbReference>
<dbReference type="FunFam" id="1.10.472.130:FF:000001">
    <property type="entry name" value="Dynein, axonemal, heavy chain 9"/>
    <property type="match status" value="1"/>
</dbReference>
<dbReference type="Gene3D" id="1.10.287.2620">
    <property type="match status" value="1"/>
</dbReference>
<dbReference type="Gene3D" id="1.10.472.130">
    <property type="match status" value="1"/>
</dbReference>
<dbReference type="Gene3D" id="1.10.8.1220">
    <property type="match status" value="1"/>
</dbReference>
<dbReference type="Gene3D" id="1.10.8.710">
    <property type="match status" value="1"/>
</dbReference>
<dbReference type="Gene3D" id="1.20.1270.280">
    <property type="match status" value="1"/>
</dbReference>
<dbReference type="Gene3D" id="1.20.58.1120">
    <property type="match status" value="1"/>
</dbReference>
<dbReference type="Gene3D" id="1.20.920.20">
    <property type="match status" value="1"/>
</dbReference>
<dbReference type="Gene3D" id="1.20.920.30">
    <property type="match status" value="1"/>
</dbReference>
<dbReference type="Gene3D" id="3.10.490.20">
    <property type="match status" value="1"/>
</dbReference>
<dbReference type="Gene3D" id="6.10.140.1060">
    <property type="match status" value="1"/>
</dbReference>
<dbReference type="Gene3D" id="1.20.140.100">
    <property type="entry name" value="Dynein heavy chain, N-terminal domain 2"/>
    <property type="match status" value="1"/>
</dbReference>
<dbReference type="Gene3D" id="3.20.180.20">
    <property type="entry name" value="Dynein heavy chain, N-terminal domain 2"/>
    <property type="match status" value="1"/>
</dbReference>
<dbReference type="Gene3D" id="3.40.50.300">
    <property type="entry name" value="P-loop containing nucleotide triphosphate hydrolases"/>
    <property type="match status" value="5"/>
</dbReference>
<dbReference type="Gene3D" id="1.10.8.720">
    <property type="entry name" value="Region D6 of dynein motor"/>
    <property type="match status" value="1"/>
</dbReference>
<dbReference type="InterPro" id="IPR035699">
    <property type="entry name" value="AAA_6"/>
</dbReference>
<dbReference type="InterPro" id="IPR035706">
    <property type="entry name" value="AAA_9"/>
</dbReference>
<dbReference type="InterPro" id="IPR041658">
    <property type="entry name" value="AAA_lid_11"/>
</dbReference>
<dbReference type="InterPro" id="IPR042219">
    <property type="entry name" value="AAA_lid_11_sf"/>
</dbReference>
<dbReference type="InterPro" id="IPR026983">
    <property type="entry name" value="DHC"/>
</dbReference>
<dbReference type="InterPro" id="IPR041589">
    <property type="entry name" value="DNAH3_AAA_lid_1"/>
</dbReference>
<dbReference type="InterPro" id="IPR042222">
    <property type="entry name" value="Dynein_2_N"/>
</dbReference>
<dbReference type="InterPro" id="IPR043157">
    <property type="entry name" value="Dynein_AAA1S"/>
</dbReference>
<dbReference type="InterPro" id="IPR041466">
    <property type="entry name" value="Dynein_AAA5_ext"/>
</dbReference>
<dbReference type="InterPro" id="IPR041228">
    <property type="entry name" value="Dynein_C"/>
</dbReference>
<dbReference type="InterPro" id="IPR043160">
    <property type="entry name" value="Dynein_C_barrel"/>
</dbReference>
<dbReference type="InterPro" id="IPR024743">
    <property type="entry name" value="Dynein_HC_stalk"/>
</dbReference>
<dbReference type="InterPro" id="IPR024317">
    <property type="entry name" value="Dynein_heavy_chain_D4_dom"/>
</dbReference>
<dbReference type="InterPro" id="IPR004273">
    <property type="entry name" value="Dynein_heavy_D6_P-loop"/>
</dbReference>
<dbReference type="InterPro" id="IPR013602">
    <property type="entry name" value="Dynein_heavy_linker"/>
</dbReference>
<dbReference type="InterPro" id="IPR013594">
    <property type="entry name" value="Dynein_heavy_tail"/>
</dbReference>
<dbReference type="InterPro" id="IPR042228">
    <property type="entry name" value="Dynein_linker_3"/>
</dbReference>
<dbReference type="InterPro" id="IPR027417">
    <property type="entry name" value="P-loop_NTPase"/>
</dbReference>
<dbReference type="PANTHER" id="PTHR45703:SF4">
    <property type="entry name" value="DYNEIN AXONEMAL HEAVY CHAIN 17"/>
    <property type="match status" value="1"/>
</dbReference>
<dbReference type="PANTHER" id="PTHR45703">
    <property type="entry name" value="DYNEIN HEAVY CHAIN"/>
    <property type="match status" value="1"/>
</dbReference>
<dbReference type="Pfam" id="PF12774">
    <property type="entry name" value="AAA_6"/>
    <property type="match status" value="1"/>
</dbReference>
<dbReference type="Pfam" id="PF12775">
    <property type="entry name" value="AAA_7"/>
    <property type="match status" value="1"/>
</dbReference>
<dbReference type="Pfam" id="PF12780">
    <property type="entry name" value="AAA_8"/>
    <property type="match status" value="1"/>
</dbReference>
<dbReference type="Pfam" id="PF12781">
    <property type="entry name" value="AAA_9"/>
    <property type="match status" value="1"/>
</dbReference>
<dbReference type="Pfam" id="PF17857">
    <property type="entry name" value="AAA_lid_1"/>
    <property type="match status" value="1"/>
</dbReference>
<dbReference type="Pfam" id="PF18198">
    <property type="entry name" value="AAA_lid_11"/>
    <property type="match status" value="1"/>
</dbReference>
<dbReference type="Pfam" id="PF08385">
    <property type="entry name" value="DHC_N1"/>
    <property type="match status" value="1"/>
</dbReference>
<dbReference type="Pfam" id="PF08393">
    <property type="entry name" value="DHC_N2"/>
    <property type="match status" value="1"/>
</dbReference>
<dbReference type="Pfam" id="PF17852">
    <property type="entry name" value="Dynein_AAA_lid"/>
    <property type="match status" value="1"/>
</dbReference>
<dbReference type="Pfam" id="PF18199">
    <property type="entry name" value="Dynein_C"/>
    <property type="match status" value="1"/>
</dbReference>
<dbReference type="Pfam" id="PF03028">
    <property type="entry name" value="Dynein_heavy"/>
    <property type="match status" value="1"/>
</dbReference>
<dbReference type="Pfam" id="PF12777">
    <property type="entry name" value="MT"/>
    <property type="match status" value="1"/>
</dbReference>
<dbReference type="SUPFAM" id="SSF52540">
    <property type="entry name" value="P-loop containing nucleoside triphosphate hydrolases"/>
    <property type="match status" value="4"/>
</dbReference>